<evidence type="ECO:0000255" key="1">
    <source>
        <dbReference type="HAMAP-Rule" id="MF_01517"/>
    </source>
</evidence>
<feature type="chain" id="PRO_0000315546" description="Malate dehydrogenase 2">
    <location>
        <begin position="1"/>
        <end position="328"/>
    </location>
</feature>
<feature type="active site" description="Proton acceptor" evidence="1">
    <location>
        <position position="188"/>
    </location>
</feature>
<feature type="binding site" evidence="1">
    <location>
        <begin position="12"/>
        <end position="18"/>
    </location>
    <ligand>
        <name>NAD(+)</name>
        <dbReference type="ChEBI" id="CHEBI:57540"/>
    </ligand>
</feature>
<feature type="binding site" evidence="1">
    <location>
        <position position="93"/>
    </location>
    <ligand>
        <name>substrate</name>
    </ligand>
</feature>
<feature type="binding site" evidence="1">
    <location>
        <position position="99"/>
    </location>
    <ligand>
        <name>substrate</name>
    </ligand>
</feature>
<feature type="binding site" evidence="1">
    <location>
        <position position="106"/>
    </location>
    <ligand>
        <name>NAD(+)</name>
        <dbReference type="ChEBI" id="CHEBI:57540"/>
    </ligand>
</feature>
<feature type="binding site" evidence="1">
    <location>
        <position position="113"/>
    </location>
    <ligand>
        <name>NAD(+)</name>
        <dbReference type="ChEBI" id="CHEBI:57540"/>
    </ligand>
</feature>
<feature type="binding site" evidence="1">
    <location>
        <begin position="130"/>
        <end position="132"/>
    </location>
    <ligand>
        <name>NAD(+)</name>
        <dbReference type="ChEBI" id="CHEBI:57540"/>
    </ligand>
</feature>
<feature type="binding site" evidence="1">
    <location>
        <position position="132"/>
    </location>
    <ligand>
        <name>substrate</name>
    </ligand>
</feature>
<feature type="binding site" evidence="1">
    <location>
        <position position="163"/>
    </location>
    <ligand>
        <name>substrate</name>
    </ligand>
</feature>
<comment type="function">
    <text evidence="1">Catalyzes the reversible oxidation of malate to oxaloacetate.</text>
</comment>
<comment type="catalytic activity">
    <reaction evidence="1">
        <text>(S)-malate + NAD(+) = oxaloacetate + NADH + H(+)</text>
        <dbReference type="Rhea" id="RHEA:21432"/>
        <dbReference type="ChEBI" id="CHEBI:15378"/>
        <dbReference type="ChEBI" id="CHEBI:15589"/>
        <dbReference type="ChEBI" id="CHEBI:16452"/>
        <dbReference type="ChEBI" id="CHEBI:57540"/>
        <dbReference type="ChEBI" id="CHEBI:57945"/>
        <dbReference type="EC" id="1.1.1.37"/>
    </reaction>
</comment>
<comment type="similarity">
    <text evidence="1">Belongs to the LDH/MDH superfamily. MDH type 2 family.</text>
</comment>
<proteinExistence type="inferred from homology"/>
<organism>
    <name type="scientific">Burkholderia vietnamiensis (strain G4 / LMG 22486)</name>
    <name type="common">Burkholderia cepacia (strain R1808)</name>
    <dbReference type="NCBI Taxonomy" id="269482"/>
    <lineage>
        <taxon>Bacteria</taxon>
        <taxon>Pseudomonadati</taxon>
        <taxon>Pseudomonadota</taxon>
        <taxon>Betaproteobacteria</taxon>
        <taxon>Burkholderiales</taxon>
        <taxon>Burkholderiaceae</taxon>
        <taxon>Burkholderia</taxon>
        <taxon>Burkholderia cepacia complex</taxon>
    </lineage>
</organism>
<protein>
    <recommendedName>
        <fullName evidence="1">Malate dehydrogenase 2</fullName>
        <ecNumber evidence="1">1.1.1.37</ecNumber>
    </recommendedName>
</protein>
<sequence>MAKPAKRVAVTGAAGQIAYSLLFRIANGDLLGKDQPVILQLLDLPQAQAAVKGVVMELEDCAFPLLAGVVITDDPKVAFKDADVALLVGARPRSKGMERKDLLSANAEIFTVQGAALNEVASRDVKVLVVGNPANTNAYIAMKSAPDLPKKNFTAMLRLDHNRALSQLAAKTGKPVASIEKLAVWGNHSPTMYPDFRFATAEGESMLKLVNDDVWNRETFIPTVGKRGAAIIEARGLSSAASAANAAIDHVRDWVLGTNGKWVTMGIPSDGSYGIPEDIIYGVPVTCENGEYKRVEGLEIDAFSREKMDGTLAELLEERDGVAHLLKN</sequence>
<reference key="1">
    <citation type="submission" date="2007-03" db="EMBL/GenBank/DDBJ databases">
        <title>Complete sequence of chromosome 2 of Burkholderia vietnamiensis G4.</title>
        <authorList>
            <consortium name="US DOE Joint Genome Institute"/>
            <person name="Copeland A."/>
            <person name="Lucas S."/>
            <person name="Lapidus A."/>
            <person name="Barry K."/>
            <person name="Detter J.C."/>
            <person name="Glavina del Rio T."/>
            <person name="Hammon N."/>
            <person name="Israni S."/>
            <person name="Dalin E."/>
            <person name="Tice H."/>
            <person name="Pitluck S."/>
            <person name="Chain P."/>
            <person name="Malfatti S."/>
            <person name="Shin M."/>
            <person name="Vergez L."/>
            <person name="Schmutz J."/>
            <person name="Larimer F."/>
            <person name="Land M."/>
            <person name="Hauser L."/>
            <person name="Kyrpides N."/>
            <person name="Tiedje J."/>
            <person name="Richardson P."/>
        </authorList>
    </citation>
    <scope>NUCLEOTIDE SEQUENCE [LARGE SCALE GENOMIC DNA]</scope>
    <source>
        <strain>G4 / LMG 22486</strain>
    </source>
</reference>
<keyword id="KW-0520">NAD</keyword>
<keyword id="KW-0560">Oxidoreductase</keyword>
<keyword id="KW-0816">Tricarboxylic acid cycle</keyword>
<accession>A4JM71</accession>
<gene>
    <name evidence="1" type="primary">mdh2</name>
    <name type="ordered locus">Bcep1808_4408</name>
</gene>
<name>MDH2_BURVG</name>
<dbReference type="EC" id="1.1.1.37" evidence="1"/>
<dbReference type="EMBL" id="CP000615">
    <property type="protein sequence ID" value="ABO57374.1"/>
    <property type="molecule type" value="Genomic_DNA"/>
</dbReference>
<dbReference type="SMR" id="A4JM71"/>
<dbReference type="KEGG" id="bvi:Bcep1808_4408"/>
<dbReference type="eggNOG" id="COG0039">
    <property type="taxonomic scope" value="Bacteria"/>
</dbReference>
<dbReference type="HOGENOM" id="CLU_040727_2_0_4"/>
<dbReference type="Proteomes" id="UP000002287">
    <property type="component" value="Chromosome 2"/>
</dbReference>
<dbReference type="GO" id="GO:0030060">
    <property type="term" value="F:L-malate dehydrogenase (NAD+) activity"/>
    <property type="evidence" value="ECO:0007669"/>
    <property type="project" value="UniProtKB-UniRule"/>
</dbReference>
<dbReference type="GO" id="GO:0006108">
    <property type="term" value="P:malate metabolic process"/>
    <property type="evidence" value="ECO:0007669"/>
    <property type="project" value="InterPro"/>
</dbReference>
<dbReference type="GO" id="GO:0006099">
    <property type="term" value="P:tricarboxylic acid cycle"/>
    <property type="evidence" value="ECO:0007669"/>
    <property type="project" value="UniProtKB-UniRule"/>
</dbReference>
<dbReference type="CDD" id="cd01338">
    <property type="entry name" value="MDH_chloroplast-like"/>
    <property type="match status" value="1"/>
</dbReference>
<dbReference type="FunFam" id="3.40.50.720:FF:000010">
    <property type="entry name" value="Malate dehydrogenase"/>
    <property type="match status" value="1"/>
</dbReference>
<dbReference type="FunFam" id="3.90.110.10:FF:000002">
    <property type="entry name" value="Malate dehydrogenase"/>
    <property type="match status" value="1"/>
</dbReference>
<dbReference type="Gene3D" id="3.90.110.10">
    <property type="entry name" value="Lactate dehydrogenase/glycoside hydrolase, family 4, C-terminal"/>
    <property type="match status" value="1"/>
</dbReference>
<dbReference type="Gene3D" id="3.40.50.720">
    <property type="entry name" value="NAD(P)-binding Rossmann-like Domain"/>
    <property type="match status" value="1"/>
</dbReference>
<dbReference type="HAMAP" id="MF_01517">
    <property type="entry name" value="Malate_dehydrog_2"/>
    <property type="match status" value="1"/>
</dbReference>
<dbReference type="InterPro" id="IPR001557">
    <property type="entry name" value="L-lactate/malate_DH"/>
</dbReference>
<dbReference type="InterPro" id="IPR022383">
    <property type="entry name" value="Lactate/malate_DH_C"/>
</dbReference>
<dbReference type="InterPro" id="IPR001236">
    <property type="entry name" value="Lactate/malate_DH_N"/>
</dbReference>
<dbReference type="InterPro" id="IPR015955">
    <property type="entry name" value="Lactate_DH/Glyco_Ohase_4_C"/>
</dbReference>
<dbReference type="InterPro" id="IPR010945">
    <property type="entry name" value="Malate_DH_type2"/>
</dbReference>
<dbReference type="InterPro" id="IPR036291">
    <property type="entry name" value="NAD(P)-bd_dom_sf"/>
</dbReference>
<dbReference type="NCBIfam" id="TIGR01759">
    <property type="entry name" value="MalateDH-SF1"/>
    <property type="match status" value="1"/>
</dbReference>
<dbReference type="NCBIfam" id="NF003916">
    <property type="entry name" value="PRK05442.1"/>
    <property type="match status" value="1"/>
</dbReference>
<dbReference type="PANTHER" id="PTHR23382">
    <property type="entry name" value="MALATE DEHYDROGENASE"/>
    <property type="match status" value="1"/>
</dbReference>
<dbReference type="Pfam" id="PF02866">
    <property type="entry name" value="Ldh_1_C"/>
    <property type="match status" value="1"/>
</dbReference>
<dbReference type="Pfam" id="PF00056">
    <property type="entry name" value="Ldh_1_N"/>
    <property type="match status" value="1"/>
</dbReference>
<dbReference type="PIRSF" id="PIRSF000102">
    <property type="entry name" value="Lac_mal_DH"/>
    <property type="match status" value="1"/>
</dbReference>
<dbReference type="SUPFAM" id="SSF56327">
    <property type="entry name" value="LDH C-terminal domain-like"/>
    <property type="match status" value="1"/>
</dbReference>
<dbReference type="SUPFAM" id="SSF51735">
    <property type="entry name" value="NAD(P)-binding Rossmann-fold domains"/>
    <property type="match status" value="1"/>
</dbReference>